<keyword id="KW-0963">Cytoplasm</keyword>
<keyword id="KW-0413">Isomerase</keyword>
<keyword id="KW-0414">Isoprene biosynthesis</keyword>
<keyword id="KW-0460">Magnesium</keyword>
<keyword id="KW-0464">Manganese</keyword>
<keyword id="KW-0479">Metal-binding</keyword>
<accession>Q6A5Z1</accession>
<organism>
    <name type="scientific">Cutibacterium acnes (strain DSM 16379 / KPA171202)</name>
    <name type="common">Propionibacterium acnes</name>
    <dbReference type="NCBI Taxonomy" id="267747"/>
    <lineage>
        <taxon>Bacteria</taxon>
        <taxon>Bacillati</taxon>
        <taxon>Actinomycetota</taxon>
        <taxon>Actinomycetes</taxon>
        <taxon>Propionibacteriales</taxon>
        <taxon>Propionibacteriaceae</taxon>
        <taxon>Cutibacterium</taxon>
    </lineage>
</organism>
<gene>
    <name evidence="1" type="primary">idi</name>
    <name type="ordered locus">PPA2115</name>
</gene>
<evidence type="ECO:0000255" key="1">
    <source>
        <dbReference type="HAMAP-Rule" id="MF_00202"/>
    </source>
</evidence>
<reference key="1">
    <citation type="journal article" date="2004" name="Science">
        <title>The complete genome sequence of Propionibacterium acnes, a commensal of human skin.</title>
        <authorList>
            <person name="Brueggemann H."/>
            <person name="Henne A."/>
            <person name="Hoster F."/>
            <person name="Liesegang H."/>
            <person name="Wiezer A."/>
            <person name="Strittmatter A."/>
            <person name="Hujer S."/>
            <person name="Duerre P."/>
            <person name="Gottschalk G."/>
        </authorList>
    </citation>
    <scope>NUCLEOTIDE SEQUENCE [LARGE SCALE GENOMIC DNA]</scope>
    <source>
        <strain>DSM 16379 / KPA171202</strain>
    </source>
</reference>
<sequence>MSHHDGENEGTSADSGYDDFVILLDDDGNHIGTAPRATVHSQHTPRHLAFSCHVLDVGGRVLVTRRALTKVAWPGVWTNTCCGHPRVGETIIDAAVRRTHQELGLDLDPRRMRVVLPDFSYRATDSGGIVEDEFCPVVVARLSLPEELVELNPDPDEVEEVAWVGWQDMYDLARSMPALLSPWAVEQMLEFGPDLPVVR</sequence>
<name>IDI_CUTAK</name>
<comment type="function">
    <text evidence="1">Catalyzes the 1,3-allylic rearrangement of the homoallylic substrate isopentenyl (IPP) to its highly electrophilic allylic isomer, dimethylallyl diphosphate (DMAPP).</text>
</comment>
<comment type="catalytic activity">
    <reaction evidence="1">
        <text>isopentenyl diphosphate = dimethylallyl diphosphate</text>
        <dbReference type="Rhea" id="RHEA:23284"/>
        <dbReference type="ChEBI" id="CHEBI:57623"/>
        <dbReference type="ChEBI" id="CHEBI:128769"/>
        <dbReference type="EC" id="5.3.3.2"/>
    </reaction>
</comment>
<comment type="cofactor">
    <cofactor evidence="1">
        <name>Mg(2+)</name>
        <dbReference type="ChEBI" id="CHEBI:18420"/>
    </cofactor>
    <text evidence="1">Binds 1 Mg(2+) ion per subunit. The magnesium ion binds only when substrate is bound.</text>
</comment>
<comment type="cofactor">
    <cofactor evidence="1">
        <name>Mn(2+)</name>
        <dbReference type="ChEBI" id="CHEBI:29035"/>
    </cofactor>
    <text evidence="1">Binds 1 Mn(2+) ion per subunit.</text>
</comment>
<comment type="pathway">
    <text evidence="1">Isoprenoid biosynthesis; dimethylallyl diphosphate biosynthesis; dimethylallyl diphosphate from isopentenyl diphosphate: step 1/1.</text>
</comment>
<comment type="subcellular location">
    <subcellularLocation>
        <location evidence="1">Cytoplasm</location>
    </subcellularLocation>
</comment>
<comment type="similarity">
    <text evidence="1">Belongs to the IPP isomerase type 1 family.</text>
</comment>
<dbReference type="EC" id="5.3.3.2" evidence="1"/>
<dbReference type="EMBL" id="AE017283">
    <property type="protein sequence ID" value="AAT83822.1"/>
    <property type="molecule type" value="Genomic_DNA"/>
</dbReference>
<dbReference type="RefSeq" id="WP_002530756.1">
    <property type="nucleotide sequence ID" value="NZ_CP025935.1"/>
</dbReference>
<dbReference type="SMR" id="Q6A5Z1"/>
<dbReference type="EnsemblBacteria" id="AAT83822">
    <property type="protein sequence ID" value="AAT83822"/>
    <property type="gene ID" value="PPA2115"/>
</dbReference>
<dbReference type="KEGG" id="pac:PPA2115"/>
<dbReference type="PATRIC" id="fig|267747.3.peg.2162"/>
<dbReference type="eggNOG" id="COG1443">
    <property type="taxonomic scope" value="Bacteria"/>
</dbReference>
<dbReference type="HOGENOM" id="CLU_060552_2_0_11"/>
<dbReference type="UniPathway" id="UPA00059">
    <property type="reaction ID" value="UER00104"/>
</dbReference>
<dbReference type="Proteomes" id="UP000000603">
    <property type="component" value="Chromosome"/>
</dbReference>
<dbReference type="GO" id="GO:0005737">
    <property type="term" value="C:cytoplasm"/>
    <property type="evidence" value="ECO:0007669"/>
    <property type="project" value="UniProtKB-SubCell"/>
</dbReference>
<dbReference type="GO" id="GO:0004452">
    <property type="term" value="F:isopentenyl-diphosphate delta-isomerase activity"/>
    <property type="evidence" value="ECO:0007669"/>
    <property type="project" value="UniProtKB-UniRule"/>
</dbReference>
<dbReference type="GO" id="GO:0046872">
    <property type="term" value="F:metal ion binding"/>
    <property type="evidence" value="ECO:0007669"/>
    <property type="project" value="UniProtKB-KW"/>
</dbReference>
<dbReference type="GO" id="GO:0050992">
    <property type="term" value="P:dimethylallyl diphosphate biosynthetic process"/>
    <property type="evidence" value="ECO:0007669"/>
    <property type="project" value="UniProtKB-UniRule"/>
</dbReference>
<dbReference type="GO" id="GO:0008299">
    <property type="term" value="P:isoprenoid biosynthetic process"/>
    <property type="evidence" value="ECO:0007669"/>
    <property type="project" value="UniProtKB-KW"/>
</dbReference>
<dbReference type="CDD" id="cd02885">
    <property type="entry name" value="NUDIX_IPP_Isomerase"/>
    <property type="match status" value="1"/>
</dbReference>
<dbReference type="Gene3D" id="3.90.79.10">
    <property type="entry name" value="Nucleoside Triphosphate Pyrophosphohydrolase"/>
    <property type="match status" value="1"/>
</dbReference>
<dbReference type="HAMAP" id="MF_00202">
    <property type="entry name" value="Idi"/>
    <property type="match status" value="1"/>
</dbReference>
<dbReference type="InterPro" id="IPR056375">
    <property type="entry name" value="Idi_bact"/>
</dbReference>
<dbReference type="InterPro" id="IPR011876">
    <property type="entry name" value="IsopentenylPP_isomerase_typ1"/>
</dbReference>
<dbReference type="InterPro" id="IPR015797">
    <property type="entry name" value="NUDIX_hydrolase-like_dom_sf"/>
</dbReference>
<dbReference type="InterPro" id="IPR000086">
    <property type="entry name" value="NUDIX_hydrolase_dom"/>
</dbReference>
<dbReference type="NCBIfam" id="TIGR02150">
    <property type="entry name" value="IPP_isom_1"/>
    <property type="match status" value="1"/>
</dbReference>
<dbReference type="NCBIfam" id="NF002995">
    <property type="entry name" value="PRK03759.1"/>
    <property type="match status" value="1"/>
</dbReference>
<dbReference type="PANTHER" id="PTHR10885">
    <property type="entry name" value="ISOPENTENYL-DIPHOSPHATE DELTA-ISOMERASE"/>
    <property type="match status" value="1"/>
</dbReference>
<dbReference type="PANTHER" id="PTHR10885:SF0">
    <property type="entry name" value="ISOPENTENYL-DIPHOSPHATE DELTA-ISOMERASE"/>
    <property type="match status" value="1"/>
</dbReference>
<dbReference type="Pfam" id="PF00293">
    <property type="entry name" value="NUDIX"/>
    <property type="match status" value="1"/>
</dbReference>
<dbReference type="PIRSF" id="PIRSF018427">
    <property type="entry name" value="Isopntndiph_ism"/>
    <property type="match status" value="1"/>
</dbReference>
<dbReference type="SUPFAM" id="SSF55811">
    <property type="entry name" value="Nudix"/>
    <property type="match status" value="1"/>
</dbReference>
<dbReference type="PROSITE" id="PS51462">
    <property type="entry name" value="NUDIX"/>
    <property type="match status" value="1"/>
</dbReference>
<protein>
    <recommendedName>
        <fullName evidence="1">Isopentenyl-diphosphate Delta-isomerase</fullName>
        <shortName evidence="1">IPP isomerase</shortName>
        <ecNumber evidence="1">5.3.3.2</ecNumber>
    </recommendedName>
    <alternativeName>
        <fullName evidence="1">IPP:DMAPP isomerase</fullName>
    </alternativeName>
    <alternativeName>
        <fullName evidence="1">Isopentenyl pyrophosphate isomerase</fullName>
    </alternativeName>
</protein>
<proteinExistence type="inferred from homology"/>
<feature type="chain" id="PRO_0000205259" description="Isopentenyl-diphosphate Delta-isomerase">
    <location>
        <begin position="1"/>
        <end position="199"/>
    </location>
</feature>
<feature type="domain" description="Nudix hydrolase">
    <location>
        <begin position="45"/>
        <end position="186"/>
    </location>
</feature>
<feature type="active site" evidence="1">
    <location>
        <position position="82"/>
    </location>
</feature>
<feature type="active site" evidence="1">
    <location>
        <position position="133"/>
    </location>
</feature>
<feature type="binding site" evidence="1">
    <location>
        <position position="40"/>
    </location>
    <ligand>
        <name>Mn(2+)</name>
        <dbReference type="ChEBI" id="CHEBI:29035"/>
    </ligand>
</feature>
<feature type="binding site" evidence="1">
    <location>
        <position position="47"/>
    </location>
    <ligand>
        <name>Mn(2+)</name>
        <dbReference type="ChEBI" id="CHEBI:29035"/>
    </ligand>
</feature>
<feature type="binding site" evidence="1">
    <location>
        <position position="82"/>
    </location>
    <ligand>
        <name>Mg(2+)</name>
        <dbReference type="ChEBI" id="CHEBI:18420"/>
    </ligand>
</feature>
<feature type="binding site" evidence="1">
    <location>
        <position position="84"/>
    </location>
    <ligand>
        <name>Mn(2+)</name>
        <dbReference type="ChEBI" id="CHEBI:29035"/>
    </ligand>
</feature>
<feature type="binding site" evidence="1">
    <location>
        <position position="102"/>
    </location>
    <ligand>
        <name>Mg(2+)</name>
        <dbReference type="ChEBI" id="CHEBI:18420"/>
    </ligand>
</feature>
<feature type="binding site" evidence="1">
    <location>
        <position position="131"/>
    </location>
    <ligand>
        <name>Mn(2+)</name>
        <dbReference type="ChEBI" id="CHEBI:29035"/>
    </ligand>
</feature>
<feature type="binding site" evidence="1">
    <location>
        <position position="133"/>
    </location>
    <ligand>
        <name>Mn(2+)</name>
        <dbReference type="ChEBI" id="CHEBI:29035"/>
    </ligand>
</feature>